<protein>
    <recommendedName>
        <fullName>Epiphycan</fullName>
    </recommendedName>
    <alternativeName>
        <fullName>Dermatan sulfate proteoglycan 3</fullName>
    </alternativeName>
    <alternativeName>
        <fullName>Proteoglycan-Lb</fullName>
        <shortName>PG-Lb</shortName>
    </alternativeName>
    <alternativeName>
        <fullName>Small chondroitin/dermatan sulfate proteoglycan</fullName>
    </alternativeName>
</protein>
<keyword id="KW-1015">Disulfide bond</keyword>
<keyword id="KW-0272">Extracellular matrix</keyword>
<keyword id="KW-0325">Glycoprotein</keyword>
<keyword id="KW-0433">Leucine-rich repeat</keyword>
<keyword id="KW-0654">Proteoglycan</keyword>
<keyword id="KW-1185">Reference proteome</keyword>
<keyword id="KW-0677">Repeat</keyword>
<keyword id="KW-0964">Secreted</keyword>
<keyword id="KW-0732">Signal</keyword>
<reference key="1">
    <citation type="journal article" date="1992" name="J. Biol. Chem.">
        <title>Proteoglycan-Lb, a small dermatan sulfate proteoglycan expressed in embryonic chick epiphyseal cartilage, is structurally related to osteoinductive factor.</title>
        <authorList>
            <person name="Shinomura T."/>
            <person name="Kimata K."/>
        </authorList>
    </citation>
    <scope>NUCLEOTIDE SEQUENCE [MRNA]</scope>
    <scope>TISSUE SPECIFICITY</scope>
    <source>
        <strain>White leghorn</strain>
        <tissue>Fetal epiphyseal cartilage</tissue>
    </source>
</reference>
<dbReference type="EMBL" id="D10485">
    <property type="protein sequence ID" value="BAA01366.1"/>
    <property type="molecule type" value="mRNA"/>
</dbReference>
<dbReference type="PIR" id="A41781">
    <property type="entry name" value="A41781"/>
</dbReference>
<dbReference type="RefSeq" id="NP_001004382.1">
    <property type="nucleotide sequence ID" value="NM_001004382.3"/>
</dbReference>
<dbReference type="SMR" id="Q90944"/>
<dbReference type="FunCoup" id="Q90944">
    <property type="interactions" value="176"/>
</dbReference>
<dbReference type="STRING" id="9031.ENSGALP00000018368"/>
<dbReference type="GlyCosmos" id="Q90944">
    <property type="glycosylation" value="3 sites, No reported glycans"/>
</dbReference>
<dbReference type="GlyGen" id="Q90944">
    <property type="glycosylation" value="2 sites"/>
</dbReference>
<dbReference type="PaxDb" id="9031-ENSGALP00000018368"/>
<dbReference type="GeneID" id="417890"/>
<dbReference type="KEGG" id="gga:417890"/>
<dbReference type="CTD" id="1833"/>
<dbReference type="VEuPathDB" id="HostDB:geneid_417890"/>
<dbReference type="eggNOG" id="KOG0619">
    <property type="taxonomic scope" value="Eukaryota"/>
</dbReference>
<dbReference type="HOGENOM" id="CLU_067583_0_0_1"/>
<dbReference type="InParanoid" id="Q90944"/>
<dbReference type="OrthoDB" id="676979at2759"/>
<dbReference type="PhylomeDB" id="Q90944"/>
<dbReference type="TreeFam" id="TF351924"/>
<dbReference type="PRO" id="PR:Q90944"/>
<dbReference type="Proteomes" id="UP000000539">
    <property type="component" value="Chromosome 1"/>
</dbReference>
<dbReference type="Bgee" id="ENSGALG00000011269">
    <property type="expression patterns" value="Expressed in colon"/>
</dbReference>
<dbReference type="GO" id="GO:0031012">
    <property type="term" value="C:extracellular matrix"/>
    <property type="evidence" value="ECO:0000318"/>
    <property type="project" value="GO_Central"/>
</dbReference>
<dbReference type="GO" id="GO:0005576">
    <property type="term" value="C:extracellular region"/>
    <property type="evidence" value="ECO:0007669"/>
    <property type="project" value="UniProtKB-KW"/>
</dbReference>
<dbReference type="GO" id="GO:0061975">
    <property type="term" value="P:articular cartilage development"/>
    <property type="evidence" value="ECO:0000318"/>
    <property type="project" value="GO_Central"/>
</dbReference>
<dbReference type="GO" id="GO:0060348">
    <property type="term" value="P:bone development"/>
    <property type="evidence" value="ECO:0000318"/>
    <property type="project" value="GO_Central"/>
</dbReference>
<dbReference type="FunFam" id="3.80.10.10:FF:000167">
    <property type="entry name" value="epiphycan"/>
    <property type="match status" value="1"/>
</dbReference>
<dbReference type="Gene3D" id="3.80.10.10">
    <property type="entry name" value="Ribonuclease Inhibitor"/>
    <property type="match status" value="1"/>
</dbReference>
<dbReference type="InterPro" id="IPR001611">
    <property type="entry name" value="Leu-rich_rpt"/>
</dbReference>
<dbReference type="InterPro" id="IPR003591">
    <property type="entry name" value="Leu-rich_rpt_typical-subtyp"/>
</dbReference>
<dbReference type="InterPro" id="IPR032675">
    <property type="entry name" value="LRR_dom_sf"/>
</dbReference>
<dbReference type="InterPro" id="IPR000372">
    <property type="entry name" value="LRRNT"/>
</dbReference>
<dbReference type="InterPro" id="IPR043547">
    <property type="entry name" value="Mimecan/Epiphycan/Opticin"/>
</dbReference>
<dbReference type="PANTHER" id="PTHR46269:SF3">
    <property type="entry name" value="EPIPHYCAN"/>
    <property type="match status" value="1"/>
</dbReference>
<dbReference type="PANTHER" id="PTHR46269">
    <property type="entry name" value="EPIPHYCAN-RELATED"/>
    <property type="match status" value="1"/>
</dbReference>
<dbReference type="Pfam" id="PF00560">
    <property type="entry name" value="LRR_1"/>
    <property type="match status" value="1"/>
</dbReference>
<dbReference type="Pfam" id="PF13855">
    <property type="entry name" value="LRR_8"/>
    <property type="match status" value="1"/>
</dbReference>
<dbReference type="Pfam" id="PF01462">
    <property type="entry name" value="LRRNT"/>
    <property type="match status" value="1"/>
</dbReference>
<dbReference type="SMART" id="SM00369">
    <property type="entry name" value="LRR_TYP"/>
    <property type="match status" value="4"/>
</dbReference>
<dbReference type="SMART" id="SM00013">
    <property type="entry name" value="LRRNT"/>
    <property type="match status" value="1"/>
</dbReference>
<dbReference type="SUPFAM" id="SSF52058">
    <property type="entry name" value="L domain-like"/>
    <property type="match status" value="1"/>
</dbReference>
<dbReference type="PROSITE" id="PS51450">
    <property type="entry name" value="LRR"/>
    <property type="match status" value="4"/>
</dbReference>
<accession>Q90944</accession>
<feature type="signal peptide" evidence="2">
    <location>
        <begin position="1"/>
        <end position="23"/>
    </location>
</feature>
<feature type="chain" id="PRO_0000032770" description="Epiphycan">
    <location>
        <begin position="24"/>
        <end position="316"/>
    </location>
</feature>
<feature type="domain" description="LRRNT">
    <location>
        <begin position="100"/>
        <end position="137"/>
    </location>
</feature>
<feature type="repeat" description="LRR 1">
    <location>
        <begin position="138"/>
        <end position="159"/>
    </location>
</feature>
<feature type="repeat" description="LRR 2">
    <location>
        <begin position="162"/>
        <end position="183"/>
    </location>
</feature>
<feature type="repeat" description="LRR 3">
    <location>
        <begin position="186"/>
        <end position="207"/>
    </location>
</feature>
<feature type="repeat" description="LRR 4">
    <location>
        <begin position="232"/>
        <end position="252"/>
    </location>
</feature>
<feature type="repeat" description="LRR 5">
    <location>
        <begin position="253"/>
        <end position="274"/>
    </location>
</feature>
<feature type="repeat" description="LRR 6">
    <location>
        <begin position="284"/>
        <end position="304"/>
    </location>
</feature>
<feature type="glycosylation site" description="O-linked (Xyl...) (dermatan sulfate) serine" evidence="2">
    <location>
        <position position="98"/>
    </location>
</feature>
<feature type="glycosylation site" description="N-linked (GlcNAc...) asparagine" evidence="2">
    <location>
        <position position="296"/>
    </location>
</feature>
<feature type="disulfide bond" evidence="1">
    <location>
        <begin position="112"/>
        <end position="124"/>
    </location>
</feature>
<feature type="disulfide bond" evidence="1">
    <location>
        <begin position="273"/>
        <end position="306"/>
    </location>
</feature>
<name>EPYC_CHICK</name>
<organism>
    <name type="scientific">Gallus gallus</name>
    <name type="common">Chicken</name>
    <dbReference type="NCBI Taxonomy" id="9031"/>
    <lineage>
        <taxon>Eukaryota</taxon>
        <taxon>Metazoa</taxon>
        <taxon>Chordata</taxon>
        <taxon>Craniata</taxon>
        <taxon>Vertebrata</taxon>
        <taxon>Euteleostomi</taxon>
        <taxon>Archelosauria</taxon>
        <taxon>Archosauria</taxon>
        <taxon>Dinosauria</taxon>
        <taxon>Saurischia</taxon>
        <taxon>Theropoda</taxon>
        <taxon>Coelurosauria</taxon>
        <taxon>Aves</taxon>
        <taxon>Neognathae</taxon>
        <taxon>Galloanserae</taxon>
        <taxon>Galliformes</taxon>
        <taxon>Phasianidae</taxon>
        <taxon>Phasianinae</taxon>
        <taxon>Gallus</taxon>
    </lineage>
</organism>
<sequence>MKTFVNIFLGFFIFESVGAVPITDTVTYDSEFYDVSLGELPHPFVSAENDQSDQVETEIGTAIPSIIQESYSSAPLTEEPEEEASTPKLIDGSSAQGSGVLVPQTQDGLPTCLLCTCLGTTVYCDDRELDAVPPLPKNTMYFYSRYNRIRKINKNDFANLNNLKRIDLTANLISEIHEDAFRRLPQLLELVLRDNRIRQLPELPSTLTLIDISNNRLGRKGIRNEAFKDLHELQHLYITDNNLDHVPLPLPESLQALHLQNNNIQEMHEDTFCKMRDFSYVRRALEDIRLDGNPINLSKTPYAYMCLPRLPVGNLI</sequence>
<proteinExistence type="evidence at transcript level"/>
<gene>
    <name type="primary">EPYC</name>
    <name type="synonym">DSPG3</name>
    <name type="synonym">PGLB</name>
</gene>
<evidence type="ECO:0000250" key="1"/>
<evidence type="ECO:0000255" key="2"/>
<evidence type="ECO:0000269" key="3">
    <source>
    </source>
</evidence>
<evidence type="ECO:0000305" key="4"/>
<comment type="function">
    <text>May have a role in bone formation and also in establishing the ordered structure of cartilage through matrix organization.</text>
</comment>
<comment type="subcellular location">
    <subcellularLocation>
        <location evidence="1">Secreted</location>
        <location evidence="1">Extracellular space</location>
        <location evidence="1">Extracellular matrix</location>
    </subcellularLocation>
</comment>
<comment type="tissue specificity">
    <text evidence="3">Preferentially expressed in flattened chondrocytes of developing chick limb cartilage. Also found in the cartilage peripheral zone bordering with bone marrow cavity.</text>
</comment>
<comment type="PTM">
    <text evidence="4">The O-linked glycosaminoglycan chain(s) are dermatan sulfate.</text>
</comment>
<comment type="similarity">
    <text evidence="4">Belongs to the small leucine-rich proteoglycan (SLRP) family. SLRP class III subfamily.</text>
</comment>